<reference key="1">
    <citation type="journal article" date="2008" name="Genome Res.">
        <title>Comparative genome analysis of Salmonella enteritidis PT4 and Salmonella gallinarum 287/91 provides insights into evolutionary and host adaptation pathways.</title>
        <authorList>
            <person name="Thomson N.R."/>
            <person name="Clayton D.J."/>
            <person name="Windhorst D."/>
            <person name="Vernikos G."/>
            <person name="Davidson S."/>
            <person name="Churcher C."/>
            <person name="Quail M.A."/>
            <person name="Stevens M."/>
            <person name="Jones M.A."/>
            <person name="Watson M."/>
            <person name="Barron A."/>
            <person name="Layton A."/>
            <person name="Pickard D."/>
            <person name="Kingsley R.A."/>
            <person name="Bignell A."/>
            <person name="Clark L."/>
            <person name="Harris B."/>
            <person name="Ormond D."/>
            <person name="Abdellah Z."/>
            <person name="Brooks K."/>
            <person name="Cherevach I."/>
            <person name="Chillingworth T."/>
            <person name="Woodward J."/>
            <person name="Norberczak H."/>
            <person name="Lord A."/>
            <person name="Arrowsmith C."/>
            <person name="Jagels K."/>
            <person name="Moule S."/>
            <person name="Mungall K."/>
            <person name="Saunders M."/>
            <person name="Whitehead S."/>
            <person name="Chabalgoity J.A."/>
            <person name="Maskell D."/>
            <person name="Humphreys T."/>
            <person name="Roberts M."/>
            <person name="Barrow P.A."/>
            <person name="Dougan G."/>
            <person name="Parkhill J."/>
        </authorList>
    </citation>
    <scope>NUCLEOTIDE SEQUENCE [LARGE SCALE GENOMIC DNA]</scope>
    <source>
        <strain>P125109</strain>
    </source>
</reference>
<feature type="chain" id="PRO_1000133007" description="Formimidoylglutamase">
    <location>
        <begin position="1"/>
        <end position="313"/>
    </location>
</feature>
<feature type="binding site" evidence="1">
    <location>
        <position position="130"/>
    </location>
    <ligand>
        <name>Mn(2+)</name>
        <dbReference type="ChEBI" id="CHEBI:29035"/>
        <label>1</label>
    </ligand>
</feature>
<feature type="binding site" evidence="1">
    <location>
        <position position="155"/>
    </location>
    <ligand>
        <name>Mn(2+)</name>
        <dbReference type="ChEBI" id="CHEBI:29035"/>
        <label>1</label>
    </ligand>
</feature>
<feature type="binding site" evidence="1">
    <location>
        <position position="155"/>
    </location>
    <ligand>
        <name>Mn(2+)</name>
        <dbReference type="ChEBI" id="CHEBI:29035"/>
        <label>2</label>
    </ligand>
</feature>
<feature type="binding site" evidence="1">
    <location>
        <position position="157"/>
    </location>
    <ligand>
        <name>Mn(2+)</name>
        <dbReference type="ChEBI" id="CHEBI:29035"/>
        <label>2</label>
    </ligand>
</feature>
<feature type="binding site" evidence="1">
    <location>
        <position position="159"/>
    </location>
    <ligand>
        <name>Mn(2+)</name>
        <dbReference type="ChEBI" id="CHEBI:29035"/>
        <label>1</label>
    </ligand>
</feature>
<feature type="binding site" evidence="1">
    <location>
        <position position="241"/>
    </location>
    <ligand>
        <name>Mn(2+)</name>
        <dbReference type="ChEBI" id="CHEBI:29035"/>
        <label>1</label>
    </ligand>
</feature>
<feature type="binding site" evidence="1">
    <location>
        <position position="241"/>
    </location>
    <ligand>
        <name>Mn(2+)</name>
        <dbReference type="ChEBI" id="CHEBI:29035"/>
        <label>2</label>
    </ligand>
</feature>
<feature type="binding site" evidence="1">
    <location>
        <position position="243"/>
    </location>
    <ligand>
        <name>Mn(2+)</name>
        <dbReference type="ChEBI" id="CHEBI:29035"/>
        <label>2</label>
    </ligand>
</feature>
<accession>B5QX59</accession>
<keyword id="KW-0369">Histidine metabolism</keyword>
<keyword id="KW-0378">Hydrolase</keyword>
<keyword id="KW-0464">Manganese</keyword>
<keyword id="KW-0479">Metal-binding</keyword>
<protein>
    <recommendedName>
        <fullName evidence="1">Formimidoylglutamase</fullName>
        <ecNumber evidence="1">3.5.3.8</ecNumber>
    </recommendedName>
    <alternativeName>
        <fullName evidence="1">Formiminoglutamase</fullName>
    </alternativeName>
    <alternativeName>
        <fullName evidence="1">Formiminoglutamate hydrolase</fullName>
    </alternativeName>
</protein>
<dbReference type="EC" id="3.5.3.8" evidence="1"/>
<dbReference type="EMBL" id="AM933172">
    <property type="protein sequence ID" value="CAR32319.1"/>
    <property type="molecule type" value="Genomic_DNA"/>
</dbReference>
<dbReference type="RefSeq" id="WP_000195683.1">
    <property type="nucleotide sequence ID" value="NC_011294.1"/>
</dbReference>
<dbReference type="SMR" id="B5QX59"/>
<dbReference type="KEGG" id="set:SEN0733"/>
<dbReference type="HOGENOM" id="CLU_039478_2_0_6"/>
<dbReference type="UniPathway" id="UPA00379">
    <property type="reaction ID" value="UER00552"/>
</dbReference>
<dbReference type="Proteomes" id="UP000000613">
    <property type="component" value="Chromosome"/>
</dbReference>
<dbReference type="GO" id="GO:0008783">
    <property type="term" value="F:agmatinase activity"/>
    <property type="evidence" value="ECO:0007669"/>
    <property type="project" value="TreeGrafter"/>
</dbReference>
<dbReference type="GO" id="GO:0050415">
    <property type="term" value="F:formimidoylglutamase activity"/>
    <property type="evidence" value="ECO:0007669"/>
    <property type="project" value="UniProtKB-UniRule"/>
</dbReference>
<dbReference type="GO" id="GO:0030145">
    <property type="term" value="F:manganese ion binding"/>
    <property type="evidence" value="ECO:0007669"/>
    <property type="project" value="UniProtKB-UniRule"/>
</dbReference>
<dbReference type="GO" id="GO:0019556">
    <property type="term" value="P:L-histidine catabolic process to glutamate and formamide"/>
    <property type="evidence" value="ECO:0007669"/>
    <property type="project" value="UniProtKB-UniPathway"/>
</dbReference>
<dbReference type="GO" id="GO:0019557">
    <property type="term" value="P:L-histidine catabolic process to glutamate and formate"/>
    <property type="evidence" value="ECO:0007669"/>
    <property type="project" value="UniProtKB-UniPathway"/>
</dbReference>
<dbReference type="GO" id="GO:0033389">
    <property type="term" value="P:putrescine biosynthetic process from arginine, via agmatine"/>
    <property type="evidence" value="ECO:0007669"/>
    <property type="project" value="TreeGrafter"/>
</dbReference>
<dbReference type="CDD" id="cd09988">
    <property type="entry name" value="Formimidoylglutamase"/>
    <property type="match status" value="1"/>
</dbReference>
<dbReference type="FunFam" id="3.40.800.10:FF:000010">
    <property type="entry name" value="Formimidoylglutamase"/>
    <property type="match status" value="1"/>
</dbReference>
<dbReference type="Gene3D" id="3.40.800.10">
    <property type="entry name" value="Ureohydrolase domain"/>
    <property type="match status" value="1"/>
</dbReference>
<dbReference type="HAMAP" id="MF_00737">
    <property type="entry name" value="Formimidoylglutam"/>
    <property type="match status" value="1"/>
</dbReference>
<dbReference type="InterPro" id="IPR005923">
    <property type="entry name" value="HutG"/>
</dbReference>
<dbReference type="InterPro" id="IPR006035">
    <property type="entry name" value="Ureohydrolase"/>
</dbReference>
<dbReference type="InterPro" id="IPR023696">
    <property type="entry name" value="Ureohydrolase_dom_sf"/>
</dbReference>
<dbReference type="NCBIfam" id="TIGR01227">
    <property type="entry name" value="hutG"/>
    <property type="match status" value="1"/>
</dbReference>
<dbReference type="PANTHER" id="PTHR11358">
    <property type="entry name" value="ARGINASE/AGMATINASE"/>
    <property type="match status" value="1"/>
</dbReference>
<dbReference type="PANTHER" id="PTHR11358:SF35">
    <property type="entry name" value="FORMIMIDOYLGLUTAMASE"/>
    <property type="match status" value="1"/>
</dbReference>
<dbReference type="Pfam" id="PF00491">
    <property type="entry name" value="Arginase"/>
    <property type="match status" value="1"/>
</dbReference>
<dbReference type="PIRSF" id="PIRSF036979">
    <property type="entry name" value="Arginase"/>
    <property type="match status" value="1"/>
</dbReference>
<dbReference type="SUPFAM" id="SSF52768">
    <property type="entry name" value="Arginase/deacetylase"/>
    <property type="match status" value="1"/>
</dbReference>
<dbReference type="PROSITE" id="PS51409">
    <property type="entry name" value="ARGINASE_2"/>
    <property type="match status" value="1"/>
</dbReference>
<proteinExistence type="inferred from homology"/>
<evidence type="ECO:0000255" key="1">
    <source>
        <dbReference type="HAMAP-Rule" id="MF_00737"/>
    </source>
</evidence>
<name>HUTG_SALEP</name>
<sequence length="313" mass="34387">MTQWYPASPALWQGRDDSIEAPDARRLFQTVTRSETFSPENWQQKIALMGFACDEGVKRNAGRPGAAGAPDALRKALANMASHQGHERLVDLGNWVAPTPDLEGAQQALRDAVSRCLRAGMRTLVLGGGHETAFGHGAGVLDAFAQESVGIINLDAHLDLRQTDRATSGTPFRQLAQLCDAQSRAFHYACFGVSRAANTQALWREAQWRNVTVVEDLDCHDALAQMTQFIDKVDKIYLTIDLDVLPVWEMPAVSAPAALGVPLIQVLRLIEPVCRSGKLQAADLVEFNPRFDEDGAAARVAARLGWQIAHWWR</sequence>
<organism>
    <name type="scientific">Salmonella enteritidis PT4 (strain P125109)</name>
    <dbReference type="NCBI Taxonomy" id="550537"/>
    <lineage>
        <taxon>Bacteria</taxon>
        <taxon>Pseudomonadati</taxon>
        <taxon>Pseudomonadota</taxon>
        <taxon>Gammaproteobacteria</taxon>
        <taxon>Enterobacterales</taxon>
        <taxon>Enterobacteriaceae</taxon>
        <taxon>Salmonella</taxon>
    </lineage>
</organism>
<comment type="function">
    <text evidence="1">Catalyzes the conversion of N-formimidoyl-L-glutamate to L-glutamate and formamide.</text>
</comment>
<comment type="catalytic activity">
    <reaction evidence="1">
        <text>N-formimidoyl-L-glutamate + H2O = formamide + L-glutamate</text>
        <dbReference type="Rhea" id="RHEA:22492"/>
        <dbReference type="ChEBI" id="CHEBI:15377"/>
        <dbReference type="ChEBI" id="CHEBI:16397"/>
        <dbReference type="ChEBI" id="CHEBI:29985"/>
        <dbReference type="ChEBI" id="CHEBI:58928"/>
        <dbReference type="EC" id="3.5.3.8"/>
    </reaction>
</comment>
<comment type="cofactor">
    <cofactor evidence="1">
        <name>Mn(2+)</name>
        <dbReference type="ChEBI" id="CHEBI:29035"/>
    </cofactor>
    <text evidence="1">Binds 2 manganese ions per subunit.</text>
</comment>
<comment type="pathway">
    <text evidence="1">Amino-acid degradation; L-histidine degradation into L-glutamate; L-glutamate from N-formimidoyl-L-glutamate (hydrolase route): step 1/1.</text>
</comment>
<comment type="similarity">
    <text evidence="1">Belongs to the arginase family.</text>
</comment>
<gene>
    <name evidence="1" type="primary">hutG</name>
    <name type="ordered locus">SEN0733</name>
</gene>